<name>ASSY_NITHX</name>
<feature type="chain" id="PRO_0000263942" description="Argininosuccinate synthase">
    <location>
        <begin position="1"/>
        <end position="409"/>
    </location>
</feature>
<feature type="binding site" evidence="1">
    <location>
        <begin position="11"/>
        <end position="19"/>
    </location>
    <ligand>
        <name>ATP</name>
        <dbReference type="ChEBI" id="CHEBI:30616"/>
    </ligand>
</feature>
<feature type="binding site" evidence="1">
    <location>
        <position position="38"/>
    </location>
    <ligand>
        <name>ATP</name>
        <dbReference type="ChEBI" id="CHEBI:30616"/>
    </ligand>
</feature>
<feature type="binding site" evidence="1">
    <location>
        <position position="91"/>
    </location>
    <ligand>
        <name>L-citrulline</name>
        <dbReference type="ChEBI" id="CHEBI:57743"/>
    </ligand>
</feature>
<feature type="binding site" evidence="1">
    <location>
        <position position="96"/>
    </location>
    <ligand>
        <name>L-citrulline</name>
        <dbReference type="ChEBI" id="CHEBI:57743"/>
    </ligand>
</feature>
<feature type="binding site" evidence="1">
    <location>
        <position position="121"/>
    </location>
    <ligand>
        <name>ATP</name>
        <dbReference type="ChEBI" id="CHEBI:30616"/>
    </ligand>
</feature>
<feature type="binding site" evidence="1">
    <location>
        <position position="123"/>
    </location>
    <ligand>
        <name>L-aspartate</name>
        <dbReference type="ChEBI" id="CHEBI:29991"/>
    </ligand>
</feature>
<feature type="binding site" evidence="1">
    <location>
        <position position="127"/>
    </location>
    <ligand>
        <name>L-aspartate</name>
        <dbReference type="ChEBI" id="CHEBI:29991"/>
    </ligand>
</feature>
<feature type="binding site" evidence="1">
    <location>
        <position position="127"/>
    </location>
    <ligand>
        <name>L-citrulline</name>
        <dbReference type="ChEBI" id="CHEBI:57743"/>
    </ligand>
</feature>
<feature type="binding site" evidence="1">
    <location>
        <position position="128"/>
    </location>
    <ligand>
        <name>L-aspartate</name>
        <dbReference type="ChEBI" id="CHEBI:29991"/>
    </ligand>
</feature>
<feature type="binding site" evidence="1">
    <location>
        <position position="131"/>
    </location>
    <ligand>
        <name>L-citrulline</name>
        <dbReference type="ChEBI" id="CHEBI:57743"/>
    </ligand>
</feature>
<feature type="binding site" evidence="1">
    <location>
        <position position="182"/>
    </location>
    <ligand>
        <name>L-citrulline</name>
        <dbReference type="ChEBI" id="CHEBI:57743"/>
    </ligand>
</feature>
<feature type="binding site" evidence="1">
    <location>
        <position position="191"/>
    </location>
    <ligand>
        <name>L-citrulline</name>
        <dbReference type="ChEBI" id="CHEBI:57743"/>
    </ligand>
</feature>
<feature type="binding site" evidence="1">
    <location>
        <position position="267"/>
    </location>
    <ligand>
        <name>L-citrulline</name>
        <dbReference type="ChEBI" id="CHEBI:57743"/>
    </ligand>
</feature>
<feature type="binding site" evidence="1">
    <location>
        <position position="279"/>
    </location>
    <ligand>
        <name>L-citrulline</name>
        <dbReference type="ChEBI" id="CHEBI:57743"/>
    </ligand>
</feature>
<gene>
    <name evidence="1" type="primary">argG</name>
    <name type="ordered locus">Nham_3623</name>
</gene>
<proteinExistence type="inferred from homology"/>
<reference key="1">
    <citation type="submission" date="2006-03" db="EMBL/GenBank/DDBJ databases">
        <title>Complete sequence of chromosome of Nitrobacter hamburgensis X14.</title>
        <authorList>
            <consortium name="US DOE Joint Genome Institute"/>
            <person name="Copeland A."/>
            <person name="Lucas S."/>
            <person name="Lapidus A."/>
            <person name="Barry K."/>
            <person name="Detter J.C."/>
            <person name="Glavina del Rio T."/>
            <person name="Hammon N."/>
            <person name="Israni S."/>
            <person name="Dalin E."/>
            <person name="Tice H."/>
            <person name="Pitluck S."/>
            <person name="Chain P."/>
            <person name="Malfatti S."/>
            <person name="Shin M."/>
            <person name="Vergez L."/>
            <person name="Schmutz J."/>
            <person name="Larimer F."/>
            <person name="Land M."/>
            <person name="Hauser L."/>
            <person name="Kyrpides N."/>
            <person name="Ivanova N."/>
            <person name="Ward B."/>
            <person name="Arp D."/>
            <person name="Klotz M."/>
            <person name="Stein L."/>
            <person name="O'Mullan G."/>
            <person name="Starkenburg S."/>
            <person name="Sayavedra L."/>
            <person name="Poret-Peterson A.T."/>
            <person name="Gentry M.E."/>
            <person name="Bruce D."/>
            <person name="Richardson P."/>
        </authorList>
    </citation>
    <scope>NUCLEOTIDE SEQUENCE [LARGE SCALE GENOMIC DNA]</scope>
    <source>
        <strain>DSM 10229 / NCIMB 13809 / X14</strain>
    </source>
</reference>
<sequence length="409" mass="45711">MSKKVEKVVLAYSGGLDTSIILKWLQTTYGAEVVTFTADLGQGEELEPARQKALLLGIKPENIFIEDLREEFVRDYVFPMFRANAVYEGQYLLGTSIARPLIAKKQIEIAEKVGADAVSHGATGKGNDQVRFELGYYALKPDITIIAPWREWDFKSREKLIAFAEQHQIPIAKDKRGEAPFSVDANLLHASSEGKVLEDPAQEVPDYVYSRTIDPQAAPDQPTYITIDFEKGDAVAIDGRTMSPATLLAKLNELGRANGIGRLDLVENRFVGMKSRGMYETPGGTILLVAHRGIEQITLDRGAAHLKDELMPKYAELIYNGFWFAPEREMLQAAIDHSQQYVSGQVRLKLYKGNVILVGRDSRYSLYDQDLVTFEEGAVAYDHRDAAGFIKLNALRLRTLGQRKKKLGL</sequence>
<accession>Q1QHE6</accession>
<dbReference type="EC" id="6.3.4.5" evidence="1"/>
<dbReference type="EMBL" id="CP000319">
    <property type="protein sequence ID" value="ABE64351.1"/>
    <property type="molecule type" value="Genomic_DNA"/>
</dbReference>
<dbReference type="RefSeq" id="WP_011511992.1">
    <property type="nucleotide sequence ID" value="NC_007964.1"/>
</dbReference>
<dbReference type="SMR" id="Q1QHE6"/>
<dbReference type="STRING" id="323097.Nham_3623"/>
<dbReference type="KEGG" id="nha:Nham_3623"/>
<dbReference type="eggNOG" id="COG0137">
    <property type="taxonomic scope" value="Bacteria"/>
</dbReference>
<dbReference type="HOGENOM" id="CLU_032784_4_2_5"/>
<dbReference type="OrthoDB" id="9801641at2"/>
<dbReference type="UniPathway" id="UPA00068">
    <property type="reaction ID" value="UER00113"/>
</dbReference>
<dbReference type="Proteomes" id="UP000001953">
    <property type="component" value="Chromosome"/>
</dbReference>
<dbReference type="GO" id="GO:0005737">
    <property type="term" value="C:cytoplasm"/>
    <property type="evidence" value="ECO:0007669"/>
    <property type="project" value="UniProtKB-SubCell"/>
</dbReference>
<dbReference type="GO" id="GO:0004055">
    <property type="term" value="F:argininosuccinate synthase activity"/>
    <property type="evidence" value="ECO:0007669"/>
    <property type="project" value="UniProtKB-UniRule"/>
</dbReference>
<dbReference type="GO" id="GO:0005524">
    <property type="term" value="F:ATP binding"/>
    <property type="evidence" value="ECO:0007669"/>
    <property type="project" value="UniProtKB-UniRule"/>
</dbReference>
<dbReference type="GO" id="GO:0000053">
    <property type="term" value="P:argininosuccinate metabolic process"/>
    <property type="evidence" value="ECO:0007669"/>
    <property type="project" value="TreeGrafter"/>
</dbReference>
<dbReference type="GO" id="GO:0006526">
    <property type="term" value="P:L-arginine biosynthetic process"/>
    <property type="evidence" value="ECO:0007669"/>
    <property type="project" value="UniProtKB-UniRule"/>
</dbReference>
<dbReference type="GO" id="GO:0000050">
    <property type="term" value="P:urea cycle"/>
    <property type="evidence" value="ECO:0007669"/>
    <property type="project" value="TreeGrafter"/>
</dbReference>
<dbReference type="CDD" id="cd01999">
    <property type="entry name" value="ASS"/>
    <property type="match status" value="1"/>
</dbReference>
<dbReference type="FunFam" id="3.40.50.620:FF:000019">
    <property type="entry name" value="Argininosuccinate synthase"/>
    <property type="match status" value="1"/>
</dbReference>
<dbReference type="FunFam" id="3.90.1260.10:FF:000007">
    <property type="entry name" value="Argininosuccinate synthase"/>
    <property type="match status" value="1"/>
</dbReference>
<dbReference type="Gene3D" id="3.90.1260.10">
    <property type="entry name" value="Argininosuccinate synthetase, chain A, domain 2"/>
    <property type="match status" value="1"/>
</dbReference>
<dbReference type="Gene3D" id="3.40.50.620">
    <property type="entry name" value="HUPs"/>
    <property type="match status" value="1"/>
</dbReference>
<dbReference type="Gene3D" id="1.20.5.470">
    <property type="entry name" value="Single helix bin"/>
    <property type="match status" value="1"/>
</dbReference>
<dbReference type="HAMAP" id="MF_00005">
    <property type="entry name" value="Arg_succ_synth_type1"/>
    <property type="match status" value="1"/>
</dbReference>
<dbReference type="InterPro" id="IPR048268">
    <property type="entry name" value="Arginosuc_syn_C"/>
</dbReference>
<dbReference type="InterPro" id="IPR048267">
    <property type="entry name" value="Arginosuc_syn_N"/>
</dbReference>
<dbReference type="InterPro" id="IPR001518">
    <property type="entry name" value="Arginosuc_synth"/>
</dbReference>
<dbReference type="InterPro" id="IPR018223">
    <property type="entry name" value="Arginosuc_synth_CS"/>
</dbReference>
<dbReference type="InterPro" id="IPR023434">
    <property type="entry name" value="Arginosuc_synth_type_1_subfam"/>
</dbReference>
<dbReference type="InterPro" id="IPR024074">
    <property type="entry name" value="AS_cat/multimer_dom_body"/>
</dbReference>
<dbReference type="InterPro" id="IPR014729">
    <property type="entry name" value="Rossmann-like_a/b/a_fold"/>
</dbReference>
<dbReference type="NCBIfam" id="TIGR00032">
    <property type="entry name" value="argG"/>
    <property type="match status" value="1"/>
</dbReference>
<dbReference type="NCBIfam" id="NF001770">
    <property type="entry name" value="PRK00509.1"/>
    <property type="match status" value="1"/>
</dbReference>
<dbReference type="PANTHER" id="PTHR11587">
    <property type="entry name" value="ARGININOSUCCINATE SYNTHASE"/>
    <property type="match status" value="1"/>
</dbReference>
<dbReference type="PANTHER" id="PTHR11587:SF2">
    <property type="entry name" value="ARGININOSUCCINATE SYNTHASE"/>
    <property type="match status" value="1"/>
</dbReference>
<dbReference type="Pfam" id="PF20979">
    <property type="entry name" value="Arginosuc_syn_C"/>
    <property type="match status" value="1"/>
</dbReference>
<dbReference type="Pfam" id="PF00764">
    <property type="entry name" value="Arginosuc_synth"/>
    <property type="match status" value="1"/>
</dbReference>
<dbReference type="SUPFAM" id="SSF52402">
    <property type="entry name" value="Adenine nucleotide alpha hydrolases-like"/>
    <property type="match status" value="1"/>
</dbReference>
<dbReference type="SUPFAM" id="SSF69864">
    <property type="entry name" value="Argininosuccinate synthetase, C-terminal domain"/>
    <property type="match status" value="1"/>
</dbReference>
<dbReference type="PROSITE" id="PS00564">
    <property type="entry name" value="ARGININOSUCCIN_SYN_1"/>
    <property type="match status" value="1"/>
</dbReference>
<dbReference type="PROSITE" id="PS00565">
    <property type="entry name" value="ARGININOSUCCIN_SYN_2"/>
    <property type="match status" value="1"/>
</dbReference>
<organism>
    <name type="scientific">Nitrobacter hamburgensis (strain DSM 10229 / NCIMB 13809 / X14)</name>
    <dbReference type="NCBI Taxonomy" id="323097"/>
    <lineage>
        <taxon>Bacteria</taxon>
        <taxon>Pseudomonadati</taxon>
        <taxon>Pseudomonadota</taxon>
        <taxon>Alphaproteobacteria</taxon>
        <taxon>Hyphomicrobiales</taxon>
        <taxon>Nitrobacteraceae</taxon>
        <taxon>Nitrobacter</taxon>
    </lineage>
</organism>
<comment type="catalytic activity">
    <reaction evidence="1">
        <text>L-citrulline + L-aspartate + ATP = 2-(N(omega)-L-arginino)succinate + AMP + diphosphate + H(+)</text>
        <dbReference type="Rhea" id="RHEA:10932"/>
        <dbReference type="ChEBI" id="CHEBI:15378"/>
        <dbReference type="ChEBI" id="CHEBI:29991"/>
        <dbReference type="ChEBI" id="CHEBI:30616"/>
        <dbReference type="ChEBI" id="CHEBI:33019"/>
        <dbReference type="ChEBI" id="CHEBI:57472"/>
        <dbReference type="ChEBI" id="CHEBI:57743"/>
        <dbReference type="ChEBI" id="CHEBI:456215"/>
        <dbReference type="EC" id="6.3.4.5"/>
    </reaction>
</comment>
<comment type="pathway">
    <text evidence="1">Amino-acid biosynthesis; L-arginine biosynthesis; L-arginine from L-ornithine and carbamoyl phosphate: step 2/3.</text>
</comment>
<comment type="subunit">
    <text evidence="1">Homotetramer.</text>
</comment>
<comment type="subcellular location">
    <subcellularLocation>
        <location evidence="1">Cytoplasm</location>
    </subcellularLocation>
</comment>
<comment type="similarity">
    <text evidence="1">Belongs to the argininosuccinate synthase family. Type 1 subfamily.</text>
</comment>
<protein>
    <recommendedName>
        <fullName evidence="1">Argininosuccinate synthase</fullName>
        <ecNumber evidence="1">6.3.4.5</ecNumber>
    </recommendedName>
    <alternativeName>
        <fullName evidence="1">Citrulline--aspartate ligase</fullName>
    </alternativeName>
</protein>
<keyword id="KW-0028">Amino-acid biosynthesis</keyword>
<keyword id="KW-0055">Arginine biosynthesis</keyword>
<keyword id="KW-0067">ATP-binding</keyword>
<keyword id="KW-0963">Cytoplasm</keyword>
<keyword id="KW-0436">Ligase</keyword>
<keyword id="KW-0547">Nucleotide-binding</keyword>
<keyword id="KW-1185">Reference proteome</keyword>
<evidence type="ECO:0000255" key="1">
    <source>
        <dbReference type="HAMAP-Rule" id="MF_00005"/>
    </source>
</evidence>